<organism>
    <name type="scientific">Dehalococcoides mccartyi (strain ATCC BAA-2100 / JCM 16839 / KCTC 5957 / BAV1)</name>
    <dbReference type="NCBI Taxonomy" id="216389"/>
    <lineage>
        <taxon>Bacteria</taxon>
        <taxon>Bacillati</taxon>
        <taxon>Chloroflexota</taxon>
        <taxon>Dehalococcoidia</taxon>
        <taxon>Dehalococcoidales</taxon>
        <taxon>Dehalococcoidaceae</taxon>
        <taxon>Dehalococcoides</taxon>
    </lineage>
</organism>
<name>Y1363_DEHMB</name>
<reference key="1">
    <citation type="submission" date="2007-05" db="EMBL/GenBank/DDBJ databases">
        <title>Complete sequence of Dehalococcoides sp. BAV1.</title>
        <authorList>
            <consortium name="US DOE Joint Genome Institute"/>
            <person name="Copeland A."/>
            <person name="Lucas S."/>
            <person name="Lapidus A."/>
            <person name="Barry K."/>
            <person name="Detter J.C."/>
            <person name="Glavina del Rio T."/>
            <person name="Hammon N."/>
            <person name="Israni S."/>
            <person name="Pitluck S."/>
            <person name="Lowry S."/>
            <person name="Clum A."/>
            <person name="Schmutz J."/>
            <person name="Larimer F."/>
            <person name="Land M."/>
            <person name="Hauser L."/>
            <person name="Kyrpides N."/>
            <person name="Kim E."/>
            <person name="Ritalahti K.M."/>
            <person name="Loeffler F."/>
            <person name="Richardson P."/>
        </authorList>
    </citation>
    <scope>NUCLEOTIDE SEQUENCE [LARGE SCALE GENOMIC DNA]</scope>
    <source>
        <strain>ATCC BAA-2100 / JCM 16839 / KCTC 5957 / BAV1</strain>
    </source>
</reference>
<proteinExistence type="inferred from homology"/>
<gene>
    <name type="ordered locus">DehaBAV1_1363</name>
</gene>
<accession>A5FPD9</accession>
<feature type="chain" id="PRO_1000079299" description="UPF0145 protein DehaBAV1_1363">
    <location>
        <begin position="1"/>
        <end position="104"/>
    </location>
</feature>
<evidence type="ECO:0000255" key="1">
    <source>
        <dbReference type="HAMAP-Rule" id="MF_00338"/>
    </source>
</evidence>
<comment type="similarity">
    <text evidence="1">Belongs to the UPF0145 family.</text>
</comment>
<protein>
    <recommendedName>
        <fullName evidence="1">UPF0145 protein DehaBAV1_1363</fullName>
    </recommendedName>
</protein>
<sequence>MIMTNTEAVAGHKIIKNLGLVKGNTIRAKHIGKDIMASLRSIVGGEIEEYTQMLDEARNEALKRMEADAKEKGANAIICVRFSTSAVMQNASEVMAYGTAVIVE</sequence>
<dbReference type="EMBL" id="CP000688">
    <property type="protein sequence ID" value="ABQ17940.1"/>
    <property type="molecule type" value="Genomic_DNA"/>
</dbReference>
<dbReference type="SMR" id="A5FPD9"/>
<dbReference type="KEGG" id="deb:DehaBAV1_1363"/>
<dbReference type="PATRIC" id="fig|216389.18.peg.1436"/>
<dbReference type="HOGENOM" id="CLU_117144_1_2_0"/>
<dbReference type="Gene3D" id="3.30.110.70">
    <property type="entry name" value="Hypothetical protein apc22750. Chain B"/>
    <property type="match status" value="1"/>
</dbReference>
<dbReference type="HAMAP" id="MF_00338">
    <property type="entry name" value="UPF0145"/>
    <property type="match status" value="1"/>
</dbReference>
<dbReference type="InterPro" id="IPR035439">
    <property type="entry name" value="UPF0145_dom_sf"/>
</dbReference>
<dbReference type="InterPro" id="IPR002765">
    <property type="entry name" value="UPF0145_YbjQ-like"/>
</dbReference>
<dbReference type="PANTHER" id="PTHR34068:SF2">
    <property type="entry name" value="UPF0145 PROTEIN SCO3412"/>
    <property type="match status" value="1"/>
</dbReference>
<dbReference type="PANTHER" id="PTHR34068">
    <property type="entry name" value="UPF0145 PROTEIN YBJQ"/>
    <property type="match status" value="1"/>
</dbReference>
<dbReference type="Pfam" id="PF01906">
    <property type="entry name" value="YbjQ_1"/>
    <property type="match status" value="1"/>
</dbReference>
<dbReference type="SUPFAM" id="SSF117782">
    <property type="entry name" value="YbjQ-like"/>
    <property type="match status" value="1"/>
</dbReference>